<accession>P00203</accession>
<reference key="1">
    <citation type="journal article" date="1982" name="Biochemistry">
        <title>Complete amino acid sequence of the 4Fe-4S, thermostable ferredoxin from Clostridium thermoaceticum.</title>
        <authorList>
            <person name="Elliott J.I."/>
            <person name="Yang S.-S."/>
            <person name="Ljungdahl L.G."/>
            <person name="Travis J."/>
            <person name="Reilly C.F."/>
        </authorList>
    </citation>
    <scope>PROTEIN SEQUENCE</scope>
</reference>
<feature type="chain" id="PRO_0000159193" description="Ferredoxin">
    <location>
        <begin position="1"/>
        <end position="63"/>
    </location>
</feature>
<feature type="domain" description="4Fe-4S ferredoxin-type" evidence="2">
    <location>
        <begin position="2"/>
        <end position="29"/>
    </location>
</feature>
<feature type="binding site" evidence="1">
    <location>
        <position position="10"/>
    </location>
    <ligand>
        <name>[4Fe-4S] cluster</name>
        <dbReference type="ChEBI" id="CHEBI:49883"/>
    </ligand>
</feature>
<feature type="binding site" evidence="1">
    <location>
        <position position="13"/>
    </location>
    <ligand>
        <name>[4Fe-4S] cluster</name>
        <dbReference type="ChEBI" id="CHEBI:49883"/>
    </ligand>
</feature>
<feature type="binding site" evidence="1">
    <location>
        <position position="16"/>
    </location>
    <ligand>
        <name>[4Fe-4S] cluster</name>
        <dbReference type="ChEBI" id="CHEBI:49883"/>
    </ligand>
</feature>
<feature type="binding site" evidence="1">
    <location>
        <position position="55"/>
    </location>
    <ligand>
        <name>[4Fe-4S] cluster</name>
        <dbReference type="ChEBI" id="CHEBI:49883"/>
    </ligand>
</feature>
<dbReference type="PIR" id="A00205">
    <property type="entry name" value="FECLC"/>
</dbReference>
<dbReference type="SMR" id="P00203"/>
<dbReference type="GO" id="GO:0051539">
    <property type="term" value="F:4 iron, 4 sulfur cluster binding"/>
    <property type="evidence" value="ECO:0007669"/>
    <property type="project" value="UniProtKB-KW"/>
</dbReference>
<dbReference type="GO" id="GO:0009055">
    <property type="term" value="F:electron transfer activity"/>
    <property type="evidence" value="ECO:0007669"/>
    <property type="project" value="InterPro"/>
</dbReference>
<dbReference type="GO" id="GO:0005506">
    <property type="term" value="F:iron ion binding"/>
    <property type="evidence" value="ECO:0007669"/>
    <property type="project" value="InterPro"/>
</dbReference>
<dbReference type="Gene3D" id="3.30.70.20">
    <property type="match status" value="1"/>
</dbReference>
<dbReference type="InterPro" id="IPR001080">
    <property type="entry name" value="3Fe4S_ferredoxin"/>
</dbReference>
<dbReference type="InterPro" id="IPR017896">
    <property type="entry name" value="4Fe4S_Fe-S-bd"/>
</dbReference>
<dbReference type="InterPro" id="IPR017900">
    <property type="entry name" value="4Fe4S_Fe_S_CS"/>
</dbReference>
<dbReference type="InterPro" id="IPR051269">
    <property type="entry name" value="Fe-S_cluster_ET"/>
</dbReference>
<dbReference type="PANTHER" id="PTHR36923">
    <property type="entry name" value="FERREDOXIN"/>
    <property type="match status" value="1"/>
</dbReference>
<dbReference type="PANTHER" id="PTHR36923:SF3">
    <property type="entry name" value="FERREDOXIN"/>
    <property type="match status" value="1"/>
</dbReference>
<dbReference type="Pfam" id="PF13370">
    <property type="entry name" value="Fer4_13"/>
    <property type="match status" value="1"/>
</dbReference>
<dbReference type="PRINTS" id="PR00352">
    <property type="entry name" value="3FE4SFRDOXIN"/>
</dbReference>
<dbReference type="SUPFAM" id="SSF54862">
    <property type="entry name" value="4Fe-4S ferredoxins"/>
    <property type="match status" value="1"/>
</dbReference>
<dbReference type="PROSITE" id="PS00198">
    <property type="entry name" value="4FE4S_FER_1"/>
    <property type="match status" value="1"/>
</dbReference>
<dbReference type="PROSITE" id="PS51379">
    <property type="entry name" value="4FE4S_FER_2"/>
    <property type="match status" value="1"/>
</dbReference>
<name>FER_MOOTH</name>
<proteinExistence type="evidence at protein level"/>
<comment type="function">
    <text>Ferredoxins are iron-sulfur proteins that transfer electrons in a wide variety of metabolic reactions.</text>
</comment>
<comment type="cofactor">
    <cofactor>
        <name>[4Fe-4S] cluster</name>
        <dbReference type="ChEBI" id="CHEBI:49883"/>
    </cofactor>
    <text>Binds 1 [4Fe-4S] cluster.</text>
</comment>
<protein>
    <recommendedName>
        <fullName>Ferredoxin</fullName>
    </recommendedName>
</protein>
<sequence length="63" mass="6831">MKVTVDQDLCIACGTCIDLCPSVFDWDDEGLSHVIVDEVPEGAEDSCARESVNECPTEAIKEV</sequence>
<organism>
    <name type="scientific">Moorella thermoacetica</name>
    <name type="common">Clostridium thermoaceticum</name>
    <dbReference type="NCBI Taxonomy" id="1525"/>
    <lineage>
        <taxon>Bacteria</taxon>
        <taxon>Bacillati</taxon>
        <taxon>Bacillota</taxon>
        <taxon>Clostridia</taxon>
        <taxon>Moorellales</taxon>
        <taxon>Moorellaceae</taxon>
        <taxon>Moorella</taxon>
    </lineage>
</organism>
<keyword id="KW-0004">4Fe-4S</keyword>
<keyword id="KW-0903">Direct protein sequencing</keyword>
<keyword id="KW-0249">Electron transport</keyword>
<keyword id="KW-0408">Iron</keyword>
<keyword id="KW-0411">Iron-sulfur</keyword>
<keyword id="KW-0479">Metal-binding</keyword>
<keyword id="KW-0813">Transport</keyword>
<evidence type="ECO:0000250" key="1"/>
<evidence type="ECO:0000255" key="2">
    <source>
        <dbReference type="PROSITE-ProRule" id="PRU00711"/>
    </source>
</evidence>